<evidence type="ECO:0000250" key="1"/>
<evidence type="ECO:0000255" key="2">
    <source>
        <dbReference type="PROSITE-ProRule" id="PRU00541"/>
    </source>
</evidence>
<evidence type="ECO:0000255" key="3">
    <source>
        <dbReference type="PROSITE-ProRule" id="PRU00542"/>
    </source>
</evidence>
<evidence type="ECO:0000256" key="4">
    <source>
        <dbReference type="SAM" id="MobiDB-lite"/>
    </source>
</evidence>
<evidence type="ECO:0000305" key="5"/>
<name>DBP5_SCLS1</name>
<sequence>MSESKSTSWADEVASPSTEKNEESSLEDAQVDGATEPLGGGTLQDGQYEVEVKLSDIQGDQTSPLYSVDTFEQLGIDASILKGLYAMNFKKPSKIQEKALPLLLGNPPTNMIAQSQSGTGKTAAFVITILSRLDFSKPTTPQALCLAPSRELARQIEGVVRSIGQFVEGLSVQAAIPGAVERNARVNAMVIVGTPGTVMDLIKRKSIDASQMKVLCLDEADNMLDQQGLGDQCLRVKSMIKVEQILLFSATFPDEVYGFAQQFSPRANEIKLKRDELTVSGIKQMFMDCPNEVGKYEILVKLYGLMTIGSSIIFVKRRDTASHIAERLTAEGHKVAAIHGAFEGAERDTVLEDFRQGKAKVLITTNVLARGIDVQSVSMVINYDIPMKGRSDFEPDPETYLHRIGRTGRFGRVGVSISFVFDRKSYDALNKIAHHYNIDLIKLNQDDWDETEEIVKKVIKSSRAGTNLRA</sequence>
<gene>
    <name type="primary">dbp5</name>
    <name type="ORF">SS1G_10291</name>
</gene>
<reference key="1">
    <citation type="journal article" date="2011" name="PLoS Genet.">
        <title>Genomic analysis of the necrotrophic fungal pathogens Sclerotinia sclerotiorum and Botrytis cinerea.</title>
        <authorList>
            <person name="Amselem J."/>
            <person name="Cuomo C.A."/>
            <person name="van Kan J.A.L."/>
            <person name="Viaud M."/>
            <person name="Benito E.P."/>
            <person name="Couloux A."/>
            <person name="Coutinho P.M."/>
            <person name="de Vries R.P."/>
            <person name="Dyer P.S."/>
            <person name="Fillinger S."/>
            <person name="Fournier E."/>
            <person name="Gout L."/>
            <person name="Hahn M."/>
            <person name="Kohn L."/>
            <person name="Lapalu N."/>
            <person name="Plummer K.M."/>
            <person name="Pradier J.-M."/>
            <person name="Quevillon E."/>
            <person name="Sharon A."/>
            <person name="Simon A."/>
            <person name="ten Have A."/>
            <person name="Tudzynski B."/>
            <person name="Tudzynski P."/>
            <person name="Wincker P."/>
            <person name="Andrew M."/>
            <person name="Anthouard V."/>
            <person name="Beever R.E."/>
            <person name="Beffa R."/>
            <person name="Benoit I."/>
            <person name="Bouzid O."/>
            <person name="Brault B."/>
            <person name="Chen Z."/>
            <person name="Choquer M."/>
            <person name="Collemare J."/>
            <person name="Cotton P."/>
            <person name="Danchin E.G."/>
            <person name="Da Silva C."/>
            <person name="Gautier A."/>
            <person name="Giraud C."/>
            <person name="Giraud T."/>
            <person name="Gonzalez C."/>
            <person name="Grossetete S."/>
            <person name="Gueldener U."/>
            <person name="Henrissat B."/>
            <person name="Howlett B.J."/>
            <person name="Kodira C."/>
            <person name="Kretschmer M."/>
            <person name="Lappartient A."/>
            <person name="Leroch M."/>
            <person name="Levis C."/>
            <person name="Mauceli E."/>
            <person name="Neuveglise C."/>
            <person name="Oeser B."/>
            <person name="Pearson M."/>
            <person name="Poulain J."/>
            <person name="Poussereau N."/>
            <person name="Quesneville H."/>
            <person name="Rascle C."/>
            <person name="Schumacher J."/>
            <person name="Segurens B."/>
            <person name="Sexton A."/>
            <person name="Silva E."/>
            <person name="Sirven C."/>
            <person name="Soanes D.M."/>
            <person name="Talbot N.J."/>
            <person name="Templeton M."/>
            <person name="Yandava C."/>
            <person name="Yarden O."/>
            <person name="Zeng Q."/>
            <person name="Rollins J.A."/>
            <person name="Lebrun M.-H."/>
            <person name="Dickman M."/>
        </authorList>
    </citation>
    <scope>NUCLEOTIDE SEQUENCE [LARGE SCALE GENOMIC DNA]</scope>
    <source>
        <strain>ATCC 18683 / 1980 / Ss-1</strain>
    </source>
</reference>
<keyword id="KW-0067">ATP-binding</keyword>
<keyword id="KW-0963">Cytoplasm</keyword>
<keyword id="KW-0347">Helicase</keyword>
<keyword id="KW-0378">Hydrolase</keyword>
<keyword id="KW-0472">Membrane</keyword>
<keyword id="KW-0509">mRNA transport</keyword>
<keyword id="KW-0906">Nuclear pore complex</keyword>
<keyword id="KW-0547">Nucleotide-binding</keyword>
<keyword id="KW-0539">Nucleus</keyword>
<keyword id="KW-0653">Protein transport</keyword>
<keyword id="KW-1185">Reference proteome</keyword>
<keyword id="KW-0694">RNA-binding</keyword>
<keyword id="KW-0811">Translocation</keyword>
<keyword id="KW-0813">Transport</keyword>
<proteinExistence type="inferred from homology"/>
<organism>
    <name type="scientific">Sclerotinia sclerotiorum (strain ATCC 18683 / 1980 / Ss-1)</name>
    <name type="common">White mold</name>
    <name type="synonym">Whetzelinia sclerotiorum</name>
    <dbReference type="NCBI Taxonomy" id="665079"/>
    <lineage>
        <taxon>Eukaryota</taxon>
        <taxon>Fungi</taxon>
        <taxon>Dikarya</taxon>
        <taxon>Ascomycota</taxon>
        <taxon>Pezizomycotina</taxon>
        <taxon>Leotiomycetes</taxon>
        <taxon>Helotiales</taxon>
        <taxon>Sclerotiniaceae</taxon>
        <taxon>Sclerotinia</taxon>
    </lineage>
</organism>
<feature type="chain" id="PRO_0000310205" description="ATP-dependent RNA helicase dbp5">
    <location>
        <begin position="1"/>
        <end position="470"/>
    </location>
</feature>
<feature type="domain" description="Helicase ATP-binding" evidence="2">
    <location>
        <begin position="102"/>
        <end position="270"/>
    </location>
</feature>
<feature type="domain" description="Helicase C-terminal" evidence="3">
    <location>
        <begin position="281"/>
        <end position="459"/>
    </location>
</feature>
<feature type="region of interest" description="Disordered" evidence="4">
    <location>
        <begin position="1"/>
        <end position="43"/>
    </location>
</feature>
<feature type="short sequence motif" description="Q motif">
    <location>
        <begin position="69"/>
        <end position="97"/>
    </location>
</feature>
<feature type="short sequence motif" description="DEAD box">
    <location>
        <begin position="218"/>
        <end position="221"/>
    </location>
</feature>
<feature type="binding site" evidence="2">
    <location>
        <begin position="115"/>
        <end position="122"/>
    </location>
    <ligand>
        <name>ATP</name>
        <dbReference type="ChEBI" id="CHEBI:30616"/>
    </ligand>
</feature>
<protein>
    <recommendedName>
        <fullName>ATP-dependent RNA helicase dbp5</fullName>
        <ecNumber>3.6.4.13</ecNumber>
    </recommendedName>
</protein>
<dbReference type="EC" id="3.6.4.13"/>
<dbReference type="EMBL" id="CH476635">
    <property type="protein sequence ID" value="EDN94418.1"/>
    <property type="molecule type" value="Genomic_DNA"/>
</dbReference>
<dbReference type="RefSeq" id="XP_001588744.1">
    <property type="nucleotide sequence ID" value="XM_001588694.1"/>
</dbReference>
<dbReference type="SMR" id="A7EY76"/>
<dbReference type="FunCoup" id="A7EY76">
    <property type="interactions" value="718"/>
</dbReference>
<dbReference type="STRING" id="665079.A7EY76"/>
<dbReference type="EnsemblFungi" id="EDN94418">
    <property type="protein sequence ID" value="EDN94418"/>
    <property type="gene ID" value="SS1G_10291"/>
</dbReference>
<dbReference type="GeneID" id="5485059"/>
<dbReference type="KEGG" id="ssl:SS1G_10291"/>
<dbReference type="VEuPathDB" id="FungiDB:sscle_16g109060"/>
<dbReference type="eggNOG" id="KOG0332">
    <property type="taxonomic scope" value="Eukaryota"/>
</dbReference>
<dbReference type="HOGENOM" id="CLU_003041_1_0_1"/>
<dbReference type="InParanoid" id="A7EY76"/>
<dbReference type="OMA" id="IAAETRW"/>
<dbReference type="OrthoDB" id="10265785at2759"/>
<dbReference type="Proteomes" id="UP000001312">
    <property type="component" value="Unassembled WGS sequence"/>
</dbReference>
<dbReference type="GO" id="GO:0005934">
    <property type="term" value="C:cellular bud tip"/>
    <property type="evidence" value="ECO:0007669"/>
    <property type="project" value="EnsemblFungi"/>
</dbReference>
<dbReference type="GO" id="GO:0010494">
    <property type="term" value="C:cytoplasmic stress granule"/>
    <property type="evidence" value="ECO:0000318"/>
    <property type="project" value="GO_Central"/>
</dbReference>
<dbReference type="GO" id="GO:0031965">
    <property type="term" value="C:nuclear membrane"/>
    <property type="evidence" value="ECO:0007669"/>
    <property type="project" value="UniProtKB-SubCell"/>
</dbReference>
<dbReference type="GO" id="GO:0044614">
    <property type="term" value="C:nuclear pore cytoplasmic filaments"/>
    <property type="evidence" value="ECO:0007669"/>
    <property type="project" value="EnsemblFungi"/>
</dbReference>
<dbReference type="GO" id="GO:0005634">
    <property type="term" value="C:nucleus"/>
    <property type="evidence" value="ECO:0000318"/>
    <property type="project" value="GO_Central"/>
</dbReference>
<dbReference type="GO" id="GO:0005524">
    <property type="term" value="F:ATP binding"/>
    <property type="evidence" value="ECO:0007669"/>
    <property type="project" value="UniProtKB-KW"/>
</dbReference>
<dbReference type="GO" id="GO:0016887">
    <property type="term" value="F:ATP hydrolysis activity"/>
    <property type="evidence" value="ECO:0007669"/>
    <property type="project" value="RHEA"/>
</dbReference>
<dbReference type="GO" id="GO:0000822">
    <property type="term" value="F:inositol hexakisphosphate binding"/>
    <property type="evidence" value="ECO:0007669"/>
    <property type="project" value="EnsemblFungi"/>
</dbReference>
<dbReference type="GO" id="GO:0003729">
    <property type="term" value="F:mRNA binding"/>
    <property type="evidence" value="ECO:0000318"/>
    <property type="project" value="GO_Central"/>
</dbReference>
<dbReference type="GO" id="GO:0003724">
    <property type="term" value="F:RNA helicase activity"/>
    <property type="evidence" value="ECO:0000318"/>
    <property type="project" value="GO_Central"/>
</dbReference>
<dbReference type="GO" id="GO:0016973">
    <property type="term" value="P:poly(A)+ mRNA export from nucleus"/>
    <property type="evidence" value="ECO:0000318"/>
    <property type="project" value="GO_Central"/>
</dbReference>
<dbReference type="GO" id="GO:0015031">
    <property type="term" value="P:protein transport"/>
    <property type="evidence" value="ECO:0007669"/>
    <property type="project" value="UniProtKB-KW"/>
</dbReference>
<dbReference type="GO" id="GO:0006415">
    <property type="term" value="P:translational termination"/>
    <property type="evidence" value="ECO:0007669"/>
    <property type="project" value="EnsemblFungi"/>
</dbReference>
<dbReference type="GO" id="GO:0006409">
    <property type="term" value="P:tRNA export from nucleus"/>
    <property type="evidence" value="ECO:0007669"/>
    <property type="project" value="EnsemblFungi"/>
</dbReference>
<dbReference type="CDD" id="cd17963">
    <property type="entry name" value="DEADc_DDX19_DDX25"/>
    <property type="match status" value="1"/>
</dbReference>
<dbReference type="CDD" id="cd18787">
    <property type="entry name" value="SF2_C_DEAD"/>
    <property type="match status" value="1"/>
</dbReference>
<dbReference type="FunFam" id="3.40.50.300:FF:000849">
    <property type="entry name" value="ATP-dependent RNA helicase DBP5"/>
    <property type="match status" value="1"/>
</dbReference>
<dbReference type="Gene3D" id="3.40.50.300">
    <property type="entry name" value="P-loop containing nucleotide triphosphate hydrolases"/>
    <property type="match status" value="2"/>
</dbReference>
<dbReference type="InterPro" id="IPR011545">
    <property type="entry name" value="DEAD/DEAH_box_helicase_dom"/>
</dbReference>
<dbReference type="InterPro" id="IPR014001">
    <property type="entry name" value="Helicase_ATP-bd"/>
</dbReference>
<dbReference type="InterPro" id="IPR001650">
    <property type="entry name" value="Helicase_C-like"/>
</dbReference>
<dbReference type="InterPro" id="IPR027417">
    <property type="entry name" value="P-loop_NTPase"/>
</dbReference>
<dbReference type="InterPro" id="IPR014014">
    <property type="entry name" value="RNA_helicase_DEAD_Q_motif"/>
</dbReference>
<dbReference type="PANTHER" id="PTHR47958">
    <property type="entry name" value="ATP-DEPENDENT RNA HELICASE DBP3"/>
    <property type="match status" value="1"/>
</dbReference>
<dbReference type="Pfam" id="PF00270">
    <property type="entry name" value="DEAD"/>
    <property type="match status" value="1"/>
</dbReference>
<dbReference type="Pfam" id="PF00271">
    <property type="entry name" value="Helicase_C"/>
    <property type="match status" value="1"/>
</dbReference>
<dbReference type="SMART" id="SM00487">
    <property type="entry name" value="DEXDc"/>
    <property type="match status" value="1"/>
</dbReference>
<dbReference type="SMART" id="SM00490">
    <property type="entry name" value="HELICc"/>
    <property type="match status" value="1"/>
</dbReference>
<dbReference type="SUPFAM" id="SSF52540">
    <property type="entry name" value="P-loop containing nucleoside triphosphate hydrolases"/>
    <property type="match status" value="1"/>
</dbReference>
<dbReference type="PROSITE" id="PS51192">
    <property type="entry name" value="HELICASE_ATP_BIND_1"/>
    <property type="match status" value="1"/>
</dbReference>
<dbReference type="PROSITE" id="PS51194">
    <property type="entry name" value="HELICASE_CTER"/>
    <property type="match status" value="1"/>
</dbReference>
<dbReference type="PROSITE" id="PS51195">
    <property type="entry name" value="Q_MOTIF"/>
    <property type="match status" value="1"/>
</dbReference>
<comment type="function">
    <text evidence="1">ATP-dependent RNA helicase associated with the nuclear pore complex and essential for mRNA export from the nucleus. May participate in a terminal step of mRNA export through the removal of proteins that accompany mRNA through the nucleopore complex. May also be involved in early transcription (By similarity).</text>
</comment>
<comment type="catalytic activity">
    <reaction>
        <text>ATP + H2O = ADP + phosphate + H(+)</text>
        <dbReference type="Rhea" id="RHEA:13065"/>
        <dbReference type="ChEBI" id="CHEBI:15377"/>
        <dbReference type="ChEBI" id="CHEBI:15378"/>
        <dbReference type="ChEBI" id="CHEBI:30616"/>
        <dbReference type="ChEBI" id="CHEBI:43474"/>
        <dbReference type="ChEBI" id="CHEBI:456216"/>
        <dbReference type="EC" id="3.6.4.13"/>
    </reaction>
</comment>
<comment type="subunit">
    <text evidence="1">Associates with the nuclear pore complex.</text>
</comment>
<comment type="subcellular location">
    <subcellularLocation>
        <location evidence="1">Cytoplasm</location>
    </subcellularLocation>
    <subcellularLocation>
        <location>Nucleus</location>
        <location>Nuclear pore complex</location>
    </subcellularLocation>
    <subcellularLocation>
        <location evidence="1">Nucleus membrane</location>
        <topology evidence="1">Peripheral membrane protein</topology>
        <orientation evidence="1">Cytoplasmic side</orientation>
    </subcellularLocation>
    <text evidence="1">Nuclear pore complex cytoplasmic fibrils.</text>
</comment>
<comment type="domain">
    <text>The Q motif is unique to and characteristic of the DEAD box family of RNA helicases and controls ATP binding and hydrolysis.</text>
</comment>
<comment type="similarity">
    <text evidence="5">Belongs to the DEAD box helicase family. DDX19/DBP5 subfamily.</text>
</comment>
<accession>A7EY76</accession>